<organism>
    <name type="scientific">Mus musculus</name>
    <name type="common">Mouse</name>
    <dbReference type="NCBI Taxonomy" id="10090"/>
    <lineage>
        <taxon>Eukaryota</taxon>
        <taxon>Metazoa</taxon>
        <taxon>Chordata</taxon>
        <taxon>Craniata</taxon>
        <taxon>Vertebrata</taxon>
        <taxon>Euteleostomi</taxon>
        <taxon>Mammalia</taxon>
        <taxon>Eutheria</taxon>
        <taxon>Euarchontoglires</taxon>
        <taxon>Glires</taxon>
        <taxon>Rodentia</taxon>
        <taxon>Myomorpha</taxon>
        <taxon>Muroidea</taxon>
        <taxon>Muridae</taxon>
        <taxon>Murinae</taxon>
        <taxon>Mus</taxon>
        <taxon>Mus</taxon>
    </lineage>
</organism>
<keyword id="KW-0002">3D-structure</keyword>
<keyword id="KW-0007">Acetylation</keyword>
<keyword id="KW-0013">ADP-ribosylation</keyword>
<keyword id="KW-0963">Cytoplasm</keyword>
<keyword id="KW-1017">Isopeptide bond</keyword>
<keyword id="KW-0479">Metal-binding</keyword>
<keyword id="KW-0539">Nucleus</keyword>
<keyword id="KW-0597">Phosphoprotein</keyword>
<keyword id="KW-1185">Reference proteome</keyword>
<keyword id="KW-0687">Ribonucleoprotein</keyword>
<keyword id="KW-0689">Ribosomal protein</keyword>
<keyword id="KW-0832">Ubl conjugation</keyword>
<keyword id="KW-0862">Zinc</keyword>
<keyword id="KW-0863">Zinc-finger</keyword>
<dbReference type="EMBL" id="AK018706">
    <property type="protein sequence ID" value="BAB31357.1"/>
    <property type="molecule type" value="mRNA"/>
</dbReference>
<dbReference type="EMBL" id="BC002108">
    <property type="protein sequence ID" value="AAH02108.1"/>
    <property type="molecule type" value="mRNA"/>
</dbReference>
<dbReference type="CCDS" id="CCDS24497.1"/>
<dbReference type="RefSeq" id="NP_001029037.1">
    <property type="nucleotide sequence ID" value="NM_001033865.1"/>
</dbReference>
<dbReference type="RefSeq" id="NP_077239.1">
    <property type="nucleotide sequence ID" value="NM_024277.2"/>
</dbReference>
<dbReference type="PDB" id="5GVI">
    <property type="method" value="X-ray"/>
    <property type="resolution" value="1.87 A"/>
    <property type="chains" value="B=1-76, C=1-72"/>
</dbReference>
<dbReference type="PDB" id="5XIS">
    <property type="method" value="X-ray"/>
    <property type="resolution" value="1.78 A"/>
    <property type="chains" value="B/C/E/F=1-76"/>
</dbReference>
<dbReference type="PDB" id="5XIT">
    <property type="method" value="X-ray"/>
    <property type="resolution" value="2.25 A"/>
    <property type="chains" value="B/D/F/H=1-76"/>
</dbReference>
<dbReference type="PDB" id="5XIU">
    <property type="method" value="X-ray"/>
    <property type="resolution" value="1.80 A"/>
    <property type="chains" value="B=1-76"/>
</dbReference>
<dbReference type="PDB" id="7E62">
    <property type="method" value="X-ray"/>
    <property type="resolution" value="1.99 A"/>
    <property type="chains" value="A/H=1-76, B/I=1-77"/>
</dbReference>
<dbReference type="PDB" id="7LS1">
    <property type="method" value="EM"/>
    <property type="resolution" value="3.30 A"/>
    <property type="chains" value="U3=1-156"/>
</dbReference>
<dbReference type="PDB" id="7LS2">
    <property type="method" value="EM"/>
    <property type="resolution" value="3.10 A"/>
    <property type="chains" value="U3=1-156"/>
</dbReference>
<dbReference type="PDBsum" id="5GVI"/>
<dbReference type="PDBsum" id="5XIS"/>
<dbReference type="PDBsum" id="5XIT"/>
<dbReference type="PDBsum" id="5XIU"/>
<dbReference type="PDBsum" id="7E62"/>
<dbReference type="PDBsum" id="7LS1"/>
<dbReference type="PDBsum" id="7LS2"/>
<dbReference type="EMDB" id="EMD-23500"/>
<dbReference type="EMDB" id="EMD-23501"/>
<dbReference type="SMR" id="P62983"/>
<dbReference type="BioGRID" id="219309">
    <property type="interactions" value="108"/>
</dbReference>
<dbReference type="ComplexPortal" id="CPX-5261">
    <property type="entry name" value="40S cytosolic small ribosomal subunit"/>
</dbReference>
<dbReference type="FunCoup" id="P62983">
    <property type="interactions" value="2281"/>
</dbReference>
<dbReference type="IntAct" id="P62983">
    <property type="interactions" value="6"/>
</dbReference>
<dbReference type="MINT" id="P62983"/>
<dbReference type="STRING" id="10090.ENSMUSP00000099909"/>
<dbReference type="GlyGen" id="P62983">
    <property type="glycosylation" value="1 site, 1 O-linked glycan (1 site)"/>
</dbReference>
<dbReference type="iPTMnet" id="P62983"/>
<dbReference type="MetOSite" id="P62983"/>
<dbReference type="PhosphoSitePlus" id="P62983"/>
<dbReference type="SwissPalm" id="P62983"/>
<dbReference type="REPRODUCTION-2DPAGE" id="P62991"/>
<dbReference type="jPOST" id="P62983"/>
<dbReference type="PaxDb" id="10090-ENSMUSP00000099909"/>
<dbReference type="PeptideAtlas" id="P62983"/>
<dbReference type="ProteomicsDB" id="262733"/>
<dbReference type="Pumba" id="P62983"/>
<dbReference type="TopDownProteomics" id="P62983"/>
<dbReference type="ABCD" id="P62983">
    <property type="antibodies" value="3 sequenced antibodies"/>
</dbReference>
<dbReference type="DNASU" id="78294"/>
<dbReference type="Ensembl" id="ENSMUST00000102844.4">
    <property type="protein sequence ID" value="ENSMUSP00000099908.4"/>
    <property type="gene ID" value="ENSMUSG00000020460.16"/>
</dbReference>
<dbReference type="Ensembl" id="ENSMUST00000102845.11">
    <property type="protein sequence ID" value="ENSMUSP00000099909.5"/>
    <property type="gene ID" value="ENSMUSG00000020460.16"/>
</dbReference>
<dbReference type="GeneID" id="78294"/>
<dbReference type="KEGG" id="mmu:78294"/>
<dbReference type="UCSC" id="uc007ihg.1">
    <property type="organism name" value="mouse"/>
</dbReference>
<dbReference type="AGR" id="MGI:1925544"/>
<dbReference type="CTD" id="6233"/>
<dbReference type="MGI" id="MGI:1925544">
    <property type="gene designation" value="Rps27a"/>
</dbReference>
<dbReference type="VEuPathDB" id="HostDB:ENSMUSG00000020460"/>
<dbReference type="eggNOG" id="KOG0004">
    <property type="taxonomic scope" value="Eukaryota"/>
</dbReference>
<dbReference type="GeneTree" id="ENSGT00910000144152"/>
<dbReference type="HOGENOM" id="CLU_010412_2_0_1"/>
<dbReference type="InParanoid" id="P62983"/>
<dbReference type="OMA" id="GVFMAFH"/>
<dbReference type="OrthoDB" id="428577at2759"/>
<dbReference type="PhylomeDB" id="P62983"/>
<dbReference type="TreeFam" id="TF300036"/>
<dbReference type="Reactome" id="R-MMU-110312">
    <property type="pathway name" value="Translesion synthesis by REV1"/>
</dbReference>
<dbReference type="Reactome" id="R-MMU-110314">
    <property type="pathway name" value="Recognition of DNA damage by PCNA-containing replication complex"/>
</dbReference>
<dbReference type="Reactome" id="R-MMU-110320">
    <property type="pathway name" value="Translesion Synthesis by POLH"/>
</dbReference>
<dbReference type="Reactome" id="R-MMU-1169091">
    <property type="pathway name" value="Activation of NF-kappaB in B cells"/>
</dbReference>
<dbReference type="Reactome" id="R-MMU-1234176">
    <property type="pathway name" value="Oxygen-dependent proline hydroxylation of Hypoxia-inducible Factor Alpha"/>
</dbReference>
<dbReference type="Reactome" id="R-MMU-1253288">
    <property type="pathway name" value="Downregulation of ERBB4 signaling"/>
</dbReference>
<dbReference type="Reactome" id="R-MMU-1295596">
    <property type="pathway name" value="Spry regulation of FGF signaling"/>
</dbReference>
<dbReference type="Reactome" id="R-MMU-1358803">
    <property type="pathway name" value="Downregulation of ERBB2:ERBB3 signaling"/>
</dbReference>
<dbReference type="Reactome" id="R-MMU-156827">
    <property type="pathway name" value="L13a-mediated translational silencing of Ceruloplasmin expression"/>
</dbReference>
<dbReference type="Reactome" id="R-MMU-168638">
    <property type="pathway name" value="NOD1/2 Signaling Pathway"/>
</dbReference>
<dbReference type="Reactome" id="R-MMU-174048">
    <property type="pathway name" value="APC/C:Cdc20 mediated degradation of Cyclin B"/>
</dbReference>
<dbReference type="Reactome" id="R-MMU-174084">
    <property type="pathway name" value="Autodegradation of Cdh1 by Cdh1:APC/C"/>
</dbReference>
<dbReference type="Reactome" id="R-MMU-174113">
    <property type="pathway name" value="SCF-beta-TrCP mediated degradation of Emi1"/>
</dbReference>
<dbReference type="Reactome" id="R-MMU-174154">
    <property type="pathway name" value="APC/C:Cdc20 mediated degradation of Securin"/>
</dbReference>
<dbReference type="Reactome" id="R-MMU-174178">
    <property type="pathway name" value="APC/C:Cdh1 mediated degradation of Cdc20 and other APC/C:Cdh1 targeted proteins in late mitosis/early G1"/>
</dbReference>
<dbReference type="Reactome" id="R-MMU-174184">
    <property type="pathway name" value="Cdc20:Phospho-APC/C mediated degradation of Cyclin A"/>
</dbReference>
<dbReference type="Reactome" id="R-MMU-179409">
    <property type="pathway name" value="APC-Cdc20 mediated degradation of Nek2A"/>
</dbReference>
<dbReference type="Reactome" id="R-MMU-1799339">
    <property type="pathway name" value="SRP-dependent cotranslational protein targeting to membrane"/>
</dbReference>
<dbReference type="Reactome" id="R-MMU-182971">
    <property type="pathway name" value="EGFR downregulation"/>
</dbReference>
<dbReference type="Reactome" id="R-MMU-187577">
    <property type="pathway name" value="SCF(Skp2)-mediated degradation of p27/p21"/>
</dbReference>
<dbReference type="Reactome" id="R-MMU-195253">
    <property type="pathway name" value="Degradation of beta-catenin by the destruction complex"/>
</dbReference>
<dbReference type="Reactome" id="R-MMU-201681">
    <property type="pathway name" value="TCF dependent signaling in response to WNT"/>
</dbReference>
<dbReference type="Reactome" id="R-MMU-202424">
    <property type="pathway name" value="Downstream TCR signaling"/>
</dbReference>
<dbReference type="Reactome" id="R-MMU-205043">
    <property type="pathway name" value="NRIF signals cell death from the nucleus"/>
</dbReference>
<dbReference type="Reactome" id="R-MMU-209543">
    <property type="pathway name" value="p75NTR recruits signalling complexes"/>
</dbReference>
<dbReference type="Reactome" id="R-MMU-209560">
    <property type="pathway name" value="NF-kB is activated and signals survival"/>
</dbReference>
<dbReference type="Reactome" id="R-MMU-2122948">
    <property type="pathway name" value="Activated NOTCH1 Transmits Signal to the Nucleus"/>
</dbReference>
<dbReference type="Reactome" id="R-MMU-2173788">
    <property type="pathway name" value="Downregulation of TGF-beta receptor signaling"/>
</dbReference>
<dbReference type="Reactome" id="R-MMU-2173791">
    <property type="pathway name" value="TGF-beta receptor signaling in EMT (epithelial to mesenchymal transition)"/>
</dbReference>
<dbReference type="Reactome" id="R-MMU-2173795">
    <property type="pathway name" value="Downregulation of SMAD2/3:SMAD4 transcriptional activity"/>
</dbReference>
<dbReference type="Reactome" id="R-MMU-2173796">
    <property type="pathway name" value="SMAD2/SMAD3:SMAD4 heterotrimer regulates transcription"/>
</dbReference>
<dbReference type="Reactome" id="R-MMU-2467813">
    <property type="pathway name" value="Separation of Sister Chromatids"/>
</dbReference>
<dbReference type="Reactome" id="R-MMU-2559580">
    <property type="pathway name" value="Oxidative Stress Induced Senescence"/>
</dbReference>
<dbReference type="Reactome" id="R-MMU-2559582">
    <property type="pathway name" value="Senescence-Associated Secretory Phenotype (SASP)"/>
</dbReference>
<dbReference type="Reactome" id="R-MMU-2559585">
    <property type="pathway name" value="Oncogene Induced Senescence"/>
</dbReference>
<dbReference type="Reactome" id="R-MMU-2565942">
    <property type="pathway name" value="Regulation of PLK1 Activity at G2/M Transition"/>
</dbReference>
<dbReference type="Reactome" id="R-MMU-2672351">
    <property type="pathway name" value="Stimuli-sensing channels"/>
</dbReference>
<dbReference type="Reactome" id="R-MMU-2871837">
    <property type="pathway name" value="FCERI mediated NF-kB activation"/>
</dbReference>
<dbReference type="Reactome" id="R-MMU-3134975">
    <property type="pathway name" value="Regulation of innate immune responses to cytosolic DNA"/>
</dbReference>
<dbReference type="Reactome" id="R-MMU-349425">
    <property type="pathway name" value="Autodegradation of the E3 ubiquitin ligase COP1"/>
</dbReference>
<dbReference type="Reactome" id="R-MMU-3769402">
    <property type="pathway name" value="Deactivation of the beta-catenin transactivating complex"/>
</dbReference>
<dbReference type="Reactome" id="R-MMU-382556">
    <property type="pathway name" value="ABC-family proteins mediated transport"/>
</dbReference>
<dbReference type="Reactome" id="R-MMU-445989">
    <property type="pathway name" value="TAK1-dependent IKK and NF-kappa-B activation"/>
</dbReference>
<dbReference type="Reactome" id="R-MMU-450302">
    <property type="pathway name" value="activated TAK1 mediates p38 MAPK activation"/>
</dbReference>
<dbReference type="Reactome" id="R-MMU-450321">
    <property type="pathway name" value="JNK (c-Jun kinases) phosphorylation and activation mediated by activated human TAK1"/>
</dbReference>
<dbReference type="Reactome" id="R-MMU-450408">
    <property type="pathway name" value="AUF1 (hnRNP D0) binds and destabilizes mRNA"/>
</dbReference>
<dbReference type="Reactome" id="R-MMU-4608870">
    <property type="pathway name" value="Asymmetric localization of PCP proteins"/>
</dbReference>
<dbReference type="Reactome" id="R-MMU-4641257">
    <property type="pathway name" value="Degradation of AXIN"/>
</dbReference>
<dbReference type="Reactome" id="R-MMU-4641258">
    <property type="pathway name" value="Degradation of DVL"/>
</dbReference>
<dbReference type="Reactome" id="R-MMU-4641263">
    <property type="pathway name" value="Regulation of FZD by ubiquitination"/>
</dbReference>
<dbReference type="Reactome" id="R-MMU-5205685">
    <property type="pathway name" value="PINK1-PRKN Mediated Mitophagy"/>
</dbReference>
<dbReference type="Reactome" id="R-MMU-532668">
    <property type="pathway name" value="N-glycan trimming in the ER and Calnexin/Calreticulin cycle"/>
</dbReference>
<dbReference type="Reactome" id="R-MMU-5357905">
    <property type="pathway name" value="Regulation of TNFR1 signaling"/>
</dbReference>
<dbReference type="Reactome" id="R-MMU-5357956">
    <property type="pathway name" value="TNFR1-induced NF-kappa-B signaling pathway"/>
</dbReference>
<dbReference type="Reactome" id="R-MMU-5358346">
    <property type="pathway name" value="Hedgehog ligand biogenesis"/>
</dbReference>
<dbReference type="Reactome" id="R-MMU-5607761">
    <property type="pathway name" value="Dectin-1 mediated noncanonical NF-kB signaling"/>
</dbReference>
<dbReference type="Reactome" id="R-MMU-5607764">
    <property type="pathway name" value="CLEC7A (Dectin-1) signaling"/>
</dbReference>
<dbReference type="Reactome" id="R-MMU-5610780">
    <property type="pathway name" value="Degradation of GLI1 by the proteasome"/>
</dbReference>
<dbReference type="Reactome" id="R-MMU-5610785">
    <property type="pathway name" value="GLI3 is processed to GLI3R by the proteasome"/>
</dbReference>
<dbReference type="Reactome" id="R-MMU-5632684">
    <property type="pathway name" value="Hedgehog 'on' state"/>
</dbReference>
<dbReference type="Reactome" id="R-MMU-5654726">
    <property type="pathway name" value="Negative regulation of FGFR1 signaling"/>
</dbReference>
<dbReference type="Reactome" id="R-MMU-5654727">
    <property type="pathway name" value="Negative regulation of FGFR2 signaling"/>
</dbReference>
<dbReference type="Reactome" id="R-MMU-5654732">
    <property type="pathway name" value="Negative regulation of FGFR3 signaling"/>
</dbReference>
<dbReference type="Reactome" id="R-MMU-5654733">
    <property type="pathway name" value="Negative regulation of FGFR4 signaling"/>
</dbReference>
<dbReference type="Reactome" id="R-MMU-5655862">
    <property type="pathway name" value="Translesion synthesis by POLK"/>
</dbReference>
<dbReference type="Reactome" id="R-MMU-5656121">
    <property type="pathway name" value="Translesion synthesis by POLI"/>
</dbReference>
<dbReference type="Reactome" id="R-MMU-5656169">
    <property type="pathway name" value="Termination of translesion DNA synthesis"/>
</dbReference>
<dbReference type="Reactome" id="R-MMU-5658442">
    <property type="pathway name" value="Regulation of RAS by GAPs"/>
</dbReference>
<dbReference type="Reactome" id="R-MMU-5668541">
    <property type="pathway name" value="TNFR2 non-canonical NF-kB pathway"/>
</dbReference>
<dbReference type="Reactome" id="R-MMU-5675221">
    <property type="pathway name" value="Negative regulation of MAPK pathway"/>
</dbReference>
<dbReference type="Reactome" id="R-MMU-5675482">
    <property type="pathway name" value="Regulation of necroptotic cell death"/>
</dbReference>
<dbReference type="Reactome" id="R-MMU-5676590">
    <property type="pathway name" value="NIK--&gt;noncanonical NF-kB signaling"/>
</dbReference>
<dbReference type="Reactome" id="R-MMU-5684264">
    <property type="pathway name" value="MAP3K8 (TPL2)-dependent MAPK1/3 activation"/>
</dbReference>
<dbReference type="Reactome" id="R-MMU-5685942">
    <property type="pathway name" value="HDR through Homologous Recombination (HRR)"/>
</dbReference>
<dbReference type="Reactome" id="R-MMU-5687128">
    <property type="pathway name" value="MAPK6/MAPK4 signaling"/>
</dbReference>
<dbReference type="Reactome" id="R-MMU-5689603">
    <property type="pathway name" value="UCH proteinases"/>
</dbReference>
<dbReference type="Reactome" id="R-MMU-5689877">
    <property type="pathway name" value="Josephin domain DUBs"/>
</dbReference>
<dbReference type="Reactome" id="R-MMU-5689880">
    <property type="pathway name" value="Ub-specific processing proteases"/>
</dbReference>
<dbReference type="Reactome" id="R-MMU-5689896">
    <property type="pathway name" value="Ovarian tumor domain proteases"/>
</dbReference>
<dbReference type="Reactome" id="R-MMU-5689901">
    <property type="pathway name" value="Metalloprotease DUBs"/>
</dbReference>
<dbReference type="Reactome" id="R-MMU-5693565">
    <property type="pathway name" value="Recruitment and ATM-mediated phosphorylation of repair and signaling proteins at DNA double strand breaks"/>
</dbReference>
<dbReference type="Reactome" id="R-MMU-5693607">
    <property type="pathway name" value="Processing of DNA double-strand break ends"/>
</dbReference>
<dbReference type="Reactome" id="R-MMU-5696394">
    <property type="pathway name" value="DNA Damage Recognition in GG-NER"/>
</dbReference>
<dbReference type="Reactome" id="R-MMU-5696395">
    <property type="pathway name" value="Formation of Incision Complex in GG-NER"/>
</dbReference>
<dbReference type="Reactome" id="R-MMU-5696397">
    <property type="pathway name" value="Gap-filling DNA repair synthesis and ligation in GG-NER"/>
</dbReference>
<dbReference type="Reactome" id="R-MMU-5696400">
    <property type="pathway name" value="Dual Incision in GG-NER"/>
</dbReference>
<dbReference type="Reactome" id="R-MMU-6781823">
    <property type="pathway name" value="Formation of TC-NER Pre-Incision Complex"/>
</dbReference>
<dbReference type="Reactome" id="R-MMU-6782135">
    <property type="pathway name" value="Dual incision in TC-NER"/>
</dbReference>
<dbReference type="Reactome" id="R-MMU-6782210">
    <property type="pathway name" value="Gap-filling DNA repair synthesis and ligation in TC-NER"/>
</dbReference>
<dbReference type="Reactome" id="R-MMU-6783310">
    <property type="pathway name" value="Fanconi Anemia Pathway"/>
</dbReference>
<dbReference type="Reactome" id="R-MMU-6791226">
    <property type="pathway name" value="Major pathway of rRNA processing in the nucleolus and cytosol"/>
</dbReference>
<dbReference type="Reactome" id="R-MMU-6804756">
    <property type="pathway name" value="Regulation of TP53 Activity through Phosphorylation"/>
</dbReference>
<dbReference type="Reactome" id="R-MMU-6804757">
    <property type="pathway name" value="Regulation of TP53 Degradation"/>
</dbReference>
<dbReference type="Reactome" id="R-MMU-6804760">
    <property type="pathway name" value="Regulation of TP53 Activity through Methylation"/>
</dbReference>
<dbReference type="Reactome" id="R-MMU-6807004">
    <property type="pathway name" value="Negative regulation of MET activity"/>
</dbReference>
<dbReference type="Reactome" id="R-MMU-68867">
    <property type="pathway name" value="Assembly of the pre-replicative complex"/>
</dbReference>
<dbReference type="Reactome" id="R-MMU-68949">
    <property type="pathway name" value="Orc1 removal from chromatin"/>
</dbReference>
<dbReference type="Reactome" id="R-MMU-69017">
    <property type="pathway name" value="CDK-mediated phosphorylation and removal of Cdc6"/>
</dbReference>
<dbReference type="Reactome" id="R-MMU-69231">
    <property type="pathway name" value="Cyclin D associated events in G1"/>
</dbReference>
<dbReference type="Reactome" id="R-MMU-69481">
    <property type="pathway name" value="G2/M Checkpoints"/>
</dbReference>
<dbReference type="Reactome" id="R-MMU-69541">
    <property type="pathway name" value="Stabilization of p53"/>
</dbReference>
<dbReference type="Reactome" id="R-MMU-69601">
    <property type="pathway name" value="Ubiquitin Mediated Degradation of Phosphorylated Cdc25A"/>
</dbReference>
<dbReference type="Reactome" id="R-MMU-72649">
    <property type="pathway name" value="Translation initiation complex formation"/>
</dbReference>
<dbReference type="Reactome" id="R-MMU-72689">
    <property type="pathway name" value="Formation of a pool of free 40S subunits"/>
</dbReference>
<dbReference type="Reactome" id="R-MMU-72695">
    <property type="pathway name" value="Formation of the ternary complex, and subsequently, the 43S complex"/>
</dbReference>
<dbReference type="Reactome" id="R-MMU-72702">
    <property type="pathway name" value="Ribosomal scanning and start codon recognition"/>
</dbReference>
<dbReference type="Reactome" id="R-MMU-72706">
    <property type="pathway name" value="GTP hydrolysis and joining of the 60S ribosomal subunit"/>
</dbReference>
<dbReference type="Reactome" id="R-MMU-75815">
    <property type="pathway name" value="Ubiquitin-dependent degradation of Cyclin D"/>
</dbReference>
<dbReference type="Reactome" id="R-MMU-8849469">
    <property type="pathway name" value="PTK6 Regulates RTKs and Their Effectors AKT1 and DOK1"/>
</dbReference>
<dbReference type="Reactome" id="R-MMU-8852276">
    <property type="pathway name" value="The role of GTSE1 in G2/M progression after G2 checkpoint"/>
</dbReference>
<dbReference type="Reactome" id="R-MMU-8854050">
    <property type="pathway name" value="FBXL7 down-regulates AURKA during mitotic entry and in early mitosis"/>
</dbReference>
<dbReference type="Reactome" id="R-MMU-8856825">
    <property type="pathway name" value="Cargo recognition for clathrin-mediated endocytosis"/>
</dbReference>
<dbReference type="Reactome" id="R-MMU-8856828">
    <property type="pathway name" value="Clathrin-mediated endocytosis"/>
</dbReference>
<dbReference type="Reactome" id="R-MMU-8863795">
    <property type="pathway name" value="Downregulation of ERBB2 signaling"/>
</dbReference>
<dbReference type="Reactome" id="R-MMU-8866427">
    <property type="pathway name" value="VLDLR internalisation and degradation"/>
</dbReference>
<dbReference type="Reactome" id="R-MMU-8866652">
    <property type="pathway name" value="Synthesis of active ubiquitin: roles of E1 and E2 enzymes"/>
</dbReference>
<dbReference type="Reactome" id="R-MMU-8866654">
    <property type="pathway name" value="E3 ubiquitin ligases ubiquitinate target proteins"/>
</dbReference>
<dbReference type="Reactome" id="R-MMU-8939236">
    <property type="pathway name" value="RUNX1 regulates transcription of genes involved in differentiation of HSCs"/>
</dbReference>
<dbReference type="Reactome" id="R-MMU-8939902">
    <property type="pathway name" value="Regulation of RUNX2 expression and activity"/>
</dbReference>
<dbReference type="Reactome" id="R-MMU-8941858">
    <property type="pathway name" value="Regulation of RUNX3 expression and activity"/>
</dbReference>
<dbReference type="Reactome" id="R-MMU-8948747">
    <property type="pathway name" value="Regulation of PTEN localization"/>
</dbReference>
<dbReference type="Reactome" id="R-MMU-8948751">
    <property type="pathway name" value="Regulation of PTEN stability and activity"/>
</dbReference>
<dbReference type="Reactome" id="R-MMU-8951664">
    <property type="pathway name" value="Neddylation"/>
</dbReference>
<dbReference type="Reactome" id="R-MMU-901032">
    <property type="pathway name" value="ER Quality Control Compartment (ERQC)"/>
</dbReference>
<dbReference type="Reactome" id="R-MMU-9010553">
    <property type="pathway name" value="Regulation of expression of SLITs and ROBOs"/>
</dbReference>
<dbReference type="Reactome" id="R-MMU-9013507">
    <property type="pathway name" value="NOTCH3 Activation and Transmission of Signal to the Nucleus"/>
</dbReference>
<dbReference type="Reactome" id="R-MMU-9020702">
    <property type="pathway name" value="Interleukin-1 signaling"/>
</dbReference>
<dbReference type="Reactome" id="R-MMU-9033241">
    <property type="pathway name" value="Peroxisomal protein import"/>
</dbReference>
<dbReference type="Reactome" id="R-MMU-909733">
    <property type="pathway name" value="Interferon alpha/beta signaling"/>
</dbReference>
<dbReference type="Reactome" id="R-MMU-912631">
    <property type="pathway name" value="Regulation of signaling by CBL"/>
</dbReference>
<dbReference type="Reactome" id="R-MMU-917729">
    <property type="pathway name" value="Endosomal Sorting Complex Required For Transport (ESCRT)"/>
</dbReference>
<dbReference type="Reactome" id="R-MMU-917937">
    <property type="pathway name" value="Iron uptake and transport"/>
</dbReference>
<dbReference type="Reactome" id="R-MMU-936440">
    <property type="pathway name" value="Negative regulators of DDX58/IFIH1 signaling"/>
</dbReference>
<dbReference type="Reactome" id="R-MMU-936964">
    <property type="pathway name" value="Activation of IRF3, IRF7 mediated by TBK1, IKKEpsilon (IKBKE)"/>
</dbReference>
<dbReference type="Reactome" id="R-MMU-937039">
    <property type="pathway name" value="IRAK1 recruits IKK complex"/>
</dbReference>
<dbReference type="Reactome" id="R-MMU-937041">
    <property type="pathway name" value="IKK complex recruitment mediated by RIP1"/>
</dbReference>
<dbReference type="Reactome" id="R-MMU-937042">
    <property type="pathway name" value="IRAK2 mediated activation of TAK1 complex"/>
</dbReference>
<dbReference type="Reactome" id="R-MMU-937072">
    <property type="pathway name" value="TRAF6-mediated induction of TAK1 complex within TLR4 complex"/>
</dbReference>
<dbReference type="Reactome" id="R-MMU-9645460">
    <property type="pathway name" value="Alpha-protein kinase 1 signaling pathway"/>
</dbReference>
<dbReference type="Reactome" id="R-MMU-9646399">
    <property type="pathway name" value="Aggrephagy"/>
</dbReference>
<dbReference type="Reactome" id="R-MMU-9648002">
    <property type="pathway name" value="RAS processing"/>
</dbReference>
<dbReference type="Reactome" id="R-MMU-9664873">
    <property type="pathway name" value="Pexophagy"/>
</dbReference>
<dbReference type="Reactome" id="R-MMU-9705462">
    <property type="pathway name" value="Inactivation of CSF3 (G-CSF) signaling"/>
</dbReference>
<dbReference type="Reactome" id="R-MMU-9706369">
    <property type="pathway name" value="Negative regulation of FLT3"/>
</dbReference>
<dbReference type="Reactome" id="R-MMU-9708530">
    <property type="pathway name" value="Regulation of BACH1 activity"/>
</dbReference>
<dbReference type="Reactome" id="R-MMU-975144">
    <property type="pathway name" value="IRAK1 recruits IKK complex upon TLR7/8 or 9 stimulation"/>
</dbReference>
<dbReference type="Reactome" id="R-MMU-975163">
    <property type="pathway name" value="IRAK2 mediated activation of TAK1 complex upon TLR7/8 or 9 stimulation"/>
</dbReference>
<dbReference type="Reactome" id="R-MMU-9755511">
    <property type="pathway name" value="KEAP1-NFE2L2 pathway"/>
</dbReference>
<dbReference type="Reactome" id="R-MMU-9758274">
    <property type="pathway name" value="Regulation of NF-kappa B signaling"/>
</dbReference>
<dbReference type="Reactome" id="R-MMU-975956">
    <property type="pathway name" value="Nonsense Mediated Decay (NMD) independent of the Exon Junction Complex (EJC)"/>
</dbReference>
<dbReference type="Reactome" id="R-MMU-975957">
    <property type="pathway name" value="Nonsense Mediated Decay (NMD) enhanced by the Exon Junction Complex (EJC)"/>
</dbReference>
<dbReference type="Reactome" id="R-MMU-9762114">
    <property type="pathway name" value="GSK3B and BTRC:CUL1-mediated-degradation of NFE2L2"/>
</dbReference>
<dbReference type="Reactome" id="R-MMU-9824878">
    <property type="pathway name" value="Regulation of TBK1, IKKEpsilon (IKBKE)-mediated activation of IRF3, IRF7"/>
</dbReference>
<dbReference type="Reactome" id="R-MMU-983168">
    <property type="pathway name" value="Antigen processing: Ubiquitination &amp; Proteasome degradation"/>
</dbReference>
<dbReference type="Reactome" id="R-MMU-9861718">
    <property type="pathway name" value="Regulation of pyruvate metabolism"/>
</dbReference>
<dbReference type="BioGRID-ORCS" id="78294">
    <property type="hits" value="24 hits in 50 CRISPR screens"/>
</dbReference>
<dbReference type="ChiTaRS" id="Rps27a">
    <property type="organism name" value="mouse"/>
</dbReference>
<dbReference type="EvolutionaryTrace" id="P62983"/>
<dbReference type="PRO" id="PR:P62983"/>
<dbReference type="Proteomes" id="UP000000589">
    <property type="component" value="Chromosome 11"/>
</dbReference>
<dbReference type="RNAct" id="P62983">
    <property type="molecule type" value="protein"/>
</dbReference>
<dbReference type="Bgee" id="ENSMUSG00000020460">
    <property type="expression patterns" value="Expressed in epiblast cell in embryo and 67 other cell types or tissues"/>
</dbReference>
<dbReference type="ExpressionAtlas" id="P62983">
    <property type="expression patterns" value="baseline and differential"/>
</dbReference>
<dbReference type="GO" id="GO:0005737">
    <property type="term" value="C:cytoplasm"/>
    <property type="evidence" value="ECO:0000303"/>
    <property type="project" value="ComplexPortal"/>
</dbReference>
<dbReference type="GO" id="GO:0005829">
    <property type="term" value="C:cytosol"/>
    <property type="evidence" value="ECO:0000304"/>
    <property type="project" value="Reactome"/>
</dbReference>
<dbReference type="GO" id="GO:0022627">
    <property type="term" value="C:cytosolic small ribosomal subunit"/>
    <property type="evidence" value="ECO:0000303"/>
    <property type="project" value="ComplexPortal"/>
</dbReference>
<dbReference type="GO" id="GO:0005783">
    <property type="term" value="C:endoplasmic reticulum"/>
    <property type="evidence" value="ECO:0007669"/>
    <property type="project" value="Ensembl"/>
</dbReference>
<dbReference type="GO" id="GO:0043209">
    <property type="term" value="C:myelin sheath"/>
    <property type="evidence" value="ECO:0007005"/>
    <property type="project" value="UniProtKB"/>
</dbReference>
<dbReference type="GO" id="GO:0005730">
    <property type="term" value="C:nucleolus"/>
    <property type="evidence" value="ECO:0007669"/>
    <property type="project" value="UniProtKB-SubCell"/>
</dbReference>
<dbReference type="GO" id="GO:0005654">
    <property type="term" value="C:nucleoplasm"/>
    <property type="evidence" value="ECO:0000304"/>
    <property type="project" value="Reactome"/>
</dbReference>
<dbReference type="GO" id="GO:0098794">
    <property type="term" value="C:postsynapse"/>
    <property type="evidence" value="ECO:0000303"/>
    <property type="project" value="SynGO"/>
</dbReference>
<dbReference type="GO" id="GO:0098793">
    <property type="term" value="C:presynapse"/>
    <property type="evidence" value="ECO:0000303"/>
    <property type="project" value="SynGO"/>
</dbReference>
<dbReference type="GO" id="GO:0005840">
    <property type="term" value="C:ribosome"/>
    <property type="evidence" value="ECO:0000303"/>
    <property type="project" value="SynGO"/>
</dbReference>
<dbReference type="GO" id="GO:0032040">
    <property type="term" value="C:small-subunit processome"/>
    <property type="evidence" value="ECO:0000250"/>
    <property type="project" value="UniProtKB"/>
</dbReference>
<dbReference type="GO" id="GO:0045202">
    <property type="term" value="C:synapse"/>
    <property type="evidence" value="ECO:0000314"/>
    <property type="project" value="SynGO"/>
</dbReference>
<dbReference type="GO" id="GO:0003735">
    <property type="term" value="F:structural constituent of ribosome"/>
    <property type="evidence" value="ECO:0007669"/>
    <property type="project" value="Ensembl"/>
</dbReference>
<dbReference type="GO" id="GO:0008270">
    <property type="term" value="F:zinc ion binding"/>
    <property type="evidence" value="ECO:0007669"/>
    <property type="project" value="UniProtKB-KW"/>
</dbReference>
<dbReference type="GO" id="GO:0002181">
    <property type="term" value="P:cytoplasmic translation"/>
    <property type="evidence" value="ECO:0000303"/>
    <property type="project" value="ComplexPortal"/>
</dbReference>
<dbReference type="GO" id="GO:0042274">
    <property type="term" value="P:ribosomal small subunit biogenesis"/>
    <property type="evidence" value="ECO:0000250"/>
    <property type="project" value="UniProtKB"/>
</dbReference>
<dbReference type="GO" id="GO:0140242">
    <property type="term" value="P:translation at postsynapse"/>
    <property type="evidence" value="ECO:0000303"/>
    <property type="project" value="SynGO"/>
</dbReference>
<dbReference type="GO" id="GO:0140236">
    <property type="term" value="P:translation at presynapse"/>
    <property type="evidence" value="ECO:0000303"/>
    <property type="project" value="SynGO"/>
</dbReference>
<dbReference type="CDD" id="cd01803">
    <property type="entry name" value="Ubl_ubiquitin"/>
    <property type="match status" value="1"/>
</dbReference>
<dbReference type="FunFam" id="3.10.20.90:FF:000008">
    <property type="entry name" value="Ubiquitin-40S ribosomal protein S27a"/>
    <property type="match status" value="1"/>
</dbReference>
<dbReference type="Gene3D" id="6.20.50.150">
    <property type="match status" value="1"/>
</dbReference>
<dbReference type="Gene3D" id="3.10.20.90">
    <property type="entry name" value="Phosphatidylinositol 3-kinase Catalytic Subunit, Chain A, domain 1"/>
    <property type="match status" value="1"/>
</dbReference>
<dbReference type="InterPro" id="IPR002906">
    <property type="entry name" value="Ribosomal_eS31"/>
</dbReference>
<dbReference type="InterPro" id="IPR038582">
    <property type="entry name" value="Ribosomal_eS31_euk-type_sf"/>
</dbReference>
<dbReference type="InterPro" id="IPR011332">
    <property type="entry name" value="Ribosomal_zn-bd"/>
</dbReference>
<dbReference type="InterPro" id="IPR000626">
    <property type="entry name" value="Ubiquitin-like_dom"/>
</dbReference>
<dbReference type="InterPro" id="IPR029071">
    <property type="entry name" value="Ubiquitin-like_domsf"/>
</dbReference>
<dbReference type="InterPro" id="IPR019954">
    <property type="entry name" value="Ubiquitin_CS"/>
</dbReference>
<dbReference type="InterPro" id="IPR019956">
    <property type="entry name" value="Ubiquitin_dom"/>
</dbReference>
<dbReference type="InterPro" id="IPR050158">
    <property type="entry name" value="Ubiquitin_ubiquitin-like"/>
</dbReference>
<dbReference type="PANTHER" id="PTHR10666">
    <property type="entry name" value="UBIQUITIN"/>
    <property type="match status" value="1"/>
</dbReference>
<dbReference type="Pfam" id="PF01599">
    <property type="entry name" value="Ribosomal_S27"/>
    <property type="match status" value="1"/>
</dbReference>
<dbReference type="Pfam" id="PF00240">
    <property type="entry name" value="ubiquitin"/>
    <property type="match status" value="1"/>
</dbReference>
<dbReference type="PRINTS" id="PR00348">
    <property type="entry name" value="UBIQUITIN"/>
</dbReference>
<dbReference type="SMART" id="SM01402">
    <property type="entry name" value="Ribosomal_S27"/>
    <property type="match status" value="1"/>
</dbReference>
<dbReference type="SMART" id="SM00213">
    <property type="entry name" value="UBQ"/>
    <property type="match status" value="1"/>
</dbReference>
<dbReference type="SUPFAM" id="SSF54236">
    <property type="entry name" value="Ubiquitin-like"/>
    <property type="match status" value="1"/>
</dbReference>
<dbReference type="SUPFAM" id="SSF57829">
    <property type="entry name" value="Zn-binding ribosomal proteins"/>
    <property type="match status" value="1"/>
</dbReference>
<dbReference type="PROSITE" id="PS00299">
    <property type="entry name" value="UBIQUITIN_1"/>
    <property type="match status" value="1"/>
</dbReference>
<dbReference type="PROSITE" id="PS50053">
    <property type="entry name" value="UBIQUITIN_2"/>
    <property type="match status" value="1"/>
</dbReference>
<evidence type="ECO:0000250" key="1"/>
<evidence type="ECO:0000250" key="2">
    <source>
        <dbReference type="UniProtKB" id="P62979"/>
    </source>
</evidence>
<evidence type="ECO:0000255" key="3">
    <source>
        <dbReference type="PROSITE-ProRule" id="PRU00214"/>
    </source>
</evidence>
<evidence type="ECO:0000269" key="4">
    <source>
    </source>
</evidence>
<evidence type="ECO:0000303" key="5">
    <source>
    </source>
</evidence>
<evidence type="ECO:0000305" key="6"/>
<evidence type="ECO:0007744" key="7">
    <source>
    </source>
</evidence>
<evidence type="ECO:0007829" key="8">
    <source>
        <dbReference type="PDB" id="5XIS"/>
    </source>
</evidence>
<feature type="chain" id="PRO_0000396479" description="Ubiquitin">
    <location>
        <begin position="1"/>
        <end position="76"/>
    </location>
</feature>
<feature type="chain" id="PRO_0000137663" description="Small ribosomal subunit protein eS31">
    <location>
        <begin position="77"/>
        <end position="156"/>
    </location>
</feature>
<feature type="domain" description="Ubiquitin-like" evidence="3">
    <location>
        <begin position="1"/>
        <end position="76"/>
    </location>
</feature>
<feature type="zinc finger region" description="C4-type">
    <location>
        <begin position="121"/>
        <end position="144"/>
    </location>
</feature>
<feature type="site" description="Interacts with activating enzyme">
    <location>
        <position position="54"/>
    </location>
</feature>
<feature type="site" description="Essential for function">
    <location>
        <position position="68"/>
    </location>
</feature>
<feature type="site" description="Interacts with activating enzyme">
    <location>
        <position position="72"/>
    </location>
</feature>
<feature type="modified residue" description="Phosphoserine; by PINK1" evidence="2">
    <location>
        <position position="65"/>
    </location>
</feature>
<feature type="modified residue" description="ADP-ribosylglycine" evidence="2">
    <location>
        <position position="76"/>
    </location>
</feature>
<feature type="modified residue" description="N6-acetyllysine" evidence="2">
    <location>
        <position position="104"/>
    </location>
</feature>
<feature type="modified residue" description="N6-acetyllysine" evidence="2">
    <location>
        <position position="113"/>
    </location>
</feature>
<feature type="modified residue" description="N6-acetyllysine" evidence="7">
    <location>
        <position position="152"/>
    </location>
</feature>
<feature type="cross-link" description="Glycyl lysine isopeptide (Lys-Gly) (interchain with G-Cter in ubiquitin)" evidence="2">
    <location>
        <position position="6"/>
    </location>
</feature>
<feature type="cross-link" description="Glycyl lysine isopeptide (Lys-Gly) (interchain with G-Cter in ubiquitin)" evidence="2">
    <location>
        <position position="11"/>
    </location>
</feature>
<feature type="cross-link" description="Glycyl lysine isopeptide (Lys-Gly) (interchain with G-Cter in ubiquitin)" evidence="2">
    <location>
        <position position="27"/>
    </location>
</feature>
<feature type="cross-link" description="Glycyl lysine isopeptide (Lys-Gly) (interchain with G-Cter in ubiquitin)" evidence="2">
    <location>
        <position position="29"/>
    </location>
</feature>
<feature type="cross-link" description="Glycyl lysine isopeptide (Lys-Gly) (interchain with G-Cter in ubiquitin)" evidence="2">
    <location>
        <position position="33"/>
    </location>
</feature>
<feature type="cross-link" description="Glycyl lysine isopeptide (Lys-Gly) (interchain with G-Cter in ubiquitin)" evidence="2">
    <location>
        <position position="48"/>
    </location>
</feature>
<feature type="cross-link" description="Glycyl lysine isopeptide (Lys-Gly) (interchain with G-Cter in ubiquitin)" evidence="2">
    <location>
        <position position="63"/>
    </location>
</feature>
<feature type="cross-link" description="Glycyl lysine isopeptide (Gly-Lys) (interchain with K-? in acceptor proteins)" evidence="3">
    <location>
        <position position="76"/>
    </location>
</feature>
<feature type="cross-link" description="Glycyl lysine isopeptide (Lys-Gly) (interchain with G-Cter in ubiquitin)" evidence="2">
    <location>
        <position position="107"/>
    </location>
</feature>
<feature type="cross-link" description="Glycyl lysine isopeptide (Lys-Gly) (interchain with G-Cter in ubiquitin)" evidence="2">
    <location>
        <position position="113"/>
    </location>
</feature>
<feature type="strand" evidence="8">
    <location>
        <begin position="2"/>
        <end position="6"/>
    </location>
</feature>
<feature type="strand" evidence="8">
    <location>
        <begin position="12"/>
        <end position="16"/>
    </location>
</feature>
<feature type="helix" evidence="8">
    <location>
        <begin position="23"/>
        <end position="34"/>
    </location>
</feature>
<feature type="helix" evidence="8">
    <location>
        <begin position="38"/>
        <end position="40"/>
    </location>
</feature>
<feature type="strand" evidence="8">
    <location>
        <begin position="41"/>
        <end position="45"/>
    </location>
</feature>
<feature type="helix" evidence="8">
    <location>
        <begin position="57"/>
        <end position="59"/>
    </location>
</feature>
<feature type="strand" evidence="8">
    <location>
        <begin position="66"/>
        <end position="71"/>
    </location>
</feature>
<accession>P62983</accession>
<accession>P02248</accession>
<accession>P02249</accession>
<accession>P02250</accession>
<accession>P49664</accession>
<accession>P62991</accession>
<accession>Q29120</accession>
<accession>Q62317</accession>
<accession>Q64223</accession>
<accession>Q8VCH1</accession>
<accession>Q91887</accession>
<accession>Q91888</accession>
<accession>Q9CXY4</accession>
<accession>Q9CZM0</accession>
<accession>Q9D1R5</accession>
<accession>Q9D2W3</accession>
<accession>Q9D8D9</accession>
<accession>Q9ET23</accession>
<accession>Q9ET24</accession>
<accession>Q9Z0H9</accession>
<name>RS27A_MOUSE</name>
<sequence>MQIFVKTLTGKTITLEVEPSDTIENVKAKIQDKEGIPPDQQRLIFAGKQLEDGRTLSDYNIQKESTLHLVLRLRGGAKKRKKKSYTTPKKNKHKRKKVKLAVLKYYKVDENGKISRLRRECPSDECGAGVFMGSHFDRHYCGKCCLTYCFNKPEDK</sequence>
<proteinExistence type="evidence at protein level"/>
<comment type="function">
    <molecule>Ubiquitin</molecule>
    <text evidence="5">Exists either covalently attached to another protein, or free (unanchored). When covalently bound, it is conjugated to target proteins via an isopeptide bond either as a monomer (monoubiquitin), a polymer linked via different Lys residues of the ubiquitin (polyubiquitin chains) or a linear polymer linked via the initiator Met of the ubiquitin (linear polyubiquitin chains). Polyubiquitin chains, when attached to a target protein, have different functions depending on the Lys residue of the ubiquitin that is linked: Lys-6-linked may be involved in DNA repair; Lys-11-linked is involved in ERAD (endoplasmic reticulum-associated degradation) and in cell-cycle regulation; Lys-29-linked is involved in proteotoxic stress response and cell cycle; Lys-33-linked is involved in kinase modification; Lys-48-linked is involved in protein degradation via the proteasome; Lys-63-linked is involved in endocytosis, DNA-damage responses as well as in signaling processes leading to activation of the transcription factor NF-kappa-B. Linear polymer chains formed via attachment by the initiator Met lead to cell signaling. Ubiquitin is usually conjugated to Lys residues of target proteins, however, in rare cases, conjugation to Cys or Ser residues has been observed. When polyubiquitin is free (unanchored-polyubiquitin), it also has distinct roles, such as in activation of protein kinases, and in signaling.</text>
</comment>
<comment type="function">
    <molecule>Small ribosomal subunit protein eS31</molecule>
    <text evidence="2 4">Component of the 40S subunit of the ribosome (PubMed:19754430). Part of the small subunit (SSU) processome, first precursor of the small eukaryotic ribosomal subunit. During the assembly of the SSU processome in the nucleolus, many ribosome biogenesis factors, an RNA chaperone and ribosomal proteins associate with the nascent pre-rRNA and work in concert to generate RNA folding, modifications, rearrangements and cleavage as well as targeted degradation of pre-ribosomal RNA by the RNA exosome (By similarity).</text>
</comment>
<comment type="subunit">
    <molecule>Small ribosomal subunit protein eS31</molecule>
    <text evidence="2">Part of the 40S ribosomal subunit. Part of the small subunit (SSU) processome, composed of more than 70 proteins and the RNA chaperone small nucleolar RNA (snoRNA) U3.</text>
</comment>
<comment type="subcellular location">
    <molecule>Ubiquitin</molecule>
    <subcellularLocation>
        <location evidence="1">Cytoplasm</location>
    </subcellularLocation>
    <subcellularLocation>
        <location evidence="1">Nucleus</location>
    </subcellularLocation>
</comment>
<comment type="subcellular location">
    <molecule>Small ribosomal subunit protein eS31</molecule>
    <subcellularLocation>
        <location evidence="2">Nucleus</location>
        <location evidence="2">Nucleolus</location>
    </subcellularLocation>
</comment>
<comment type="PTM">
    <molecule>Ubiquitin</molecule>
    <text evidence="2">Phosphorylated at Ser-65 by PINK1 during mitophagy. Phosphorylated ubiquitin specifically binds and activates parkin (PRKN), triggering mitophagy. Phosphorylation does not affect E1-mediated E2 charging of ubiquitin but affects discharging of E2 enzymes to form polyubiquitin chains. It also affects deubiquitination by deubiquitinase enzymes such as USP30.</text>
</comment>
<comment type="PTM">
    <molecule>Ubiquitin</molecule>
    <text evidence="2">Mono-ADP-ribosylated at the C-terminus by PARP9, a component of the PPAR9-DTX3L complex. ADP-ribosylation requires processing by E1 and E2 enzymes and prevents ubiquitin conjugation to substrates such as histones.</text>
</comment>
<comment type="PTM">
    <molecule>Small ribosomal subunit protein eS31</molecule>
    <text evidence="2">Monoubiquitinated at Lys-107 and Lys-113 by RNF25 in response to ribosome collisions (ribosome stalling): ubiquitination promotes subsequent activation of RNF14, leading to EEF1A1 ubiquitination and degradation and rescue of stalled ribosomes. Deubiquitination at Lys-113 by USP16 is required for maturation of the 40S ribosomal complex.</text>
</comment>
<comment type="miscellaneous">
    <text>Ubiquitin is encoded by 4 different genes. Uba52 and Rps27a genes code for a single copy of ubiquitin fused to the ribosomal proteins eL40 and eS31, respectively. UBB and UBC genes code for a polyubiquitin precursor with exact head to tail repeats, the number of repeats differ between species and strains.</text>
</comment>
<comment type="similarity">
    <text evidence="6">In the N-terminal section; belongs to the ubiquitin family.</text>
</comment>
<comment type="similarity">
    <text evidence="6">In the C-terminal section; belongs to the eukaryotic ribosomal protein eS31 family.</text>
</comment>
<reference key="1">
    <citation type="journal article" date="2005" name="Science">
        <title>The transcriptional landscape of the mammalian genome.</title>
        <authorList>
            <person name="Carninci P."/>
            <person name="Kasukawa T."/>
            <person name="Katayama S."/>
            <person name="Gough J."/>
            <person name="Frith M.C."/>
            <person name="Maeda N."/>
            <person name="Oyama R."/>
            <person name="Ravasi T."/>
            <person name="Lenhard B."/>
            <person name="Wells C."/>
            <person name="Kodzius R."/>
            <person name="Shimokawa K."/>
            <person name="Bajic V.B."/>
            <person name="Brenner S.E."/>
            <person name="Batalov S."/>
            <person name="Forrest A.R."/>
            <person name="Zavolan M."/>
            <person name="Davis M.J."/>
            <person name="Wilming L.G."/>
            <person name="Aidinis V."/>
            <person name="Allen J.E."/>
            <person name="Ambesi-Impiombato A."/>
            <person name="Apweiler R."/>
            <person name="Aturaliya R.N."/>
            <person name="Bailey T.L."/>
            <person name="Bansal M."/>
            <person name="Baxter L."/>
            <person name="Beisel K.W."/>
            <person name="Bersano T."/>
            <person name="Bono H."/>
            <person name="Chalk A.M."/>
            <person name="Chiu K.P."/>
            <person name="Choudhary V."/>
            <person name="Christoffels A."/>
            <person name="Clutterbuck D.R."/>
            <person name="Crowe M.L."/>
            <person name="Dalla E."/>
            <person name="Dalrymple B.P."/>
            <person name="de Bono B."/>
            <person name="Della Gatta G."/>
            <person name="di Bernardo D."/>
            <person name="Down T."/>
            <person name="Engstrom P."/>
            <person name="Fagiolini M."/>
            <person name="Faulkner G."/>
            <person name="Fletcher C.F."/>
            <person name="Fukushima T."/>
            <person name="Furuno M."/>
            <person name="Futaki S."/>
            <person name="Gariboldi M."/>
            <person name="Georgii-Hemming P."/>
            <person name="Gingeras T.R."/>
            <person name="Gojobori T."/>
            <person name="Green R.E."/>
            <person name="Gustincich S."/>
            <person name="Harbers M."/>
            <person name="Hayashi Y."/>
            <person name="Hensch T.K."/>
            <person name="Hirokawa N."/>
            <person name="Hill D."/>
            <person name="Huminiecki L."/>
            <person name="Iacono M."/>
            <person name="Ikeo K."/>
            <person name="Iwama A."/>
            <person name="Ishikawa T."/>
            <person name="Jakt M."/>
            <person name="Kanapin A."/>
            <person name="Katoh M."/>
            <person name="Kawasawa Y."/>
            <person name="Kelso J."/>
            <person name="Kitamura H."/>
            <person name="Kitano H."/>
            <person name="Kollias G."/>
            <person name="Krishnan S.P."/>
            <person name="Kruger A."/>
            <person name="Kummerfeld S.K."/>
            <person name="Kurochkin I.V."/>
            <person name="Lareau L.F."/>
            <person name="Lazarevic D."/>
            <person name="Lipovich L."/>
            <person name="Liu J."/>
            <person name="Liuni S."/>
            <person name="McWilliam S."/>
            <person name="Madan Babu M."/>
            <person name="Madera M."/>
            <person name="Marchionni L."/>
            <person name="Matsuda H."/>
            <person name="Matsuzawa S."/>
            <person name="Miki H."/>
            <person name="Mignone F."/>
            <person name="Miyake S."/>
            <person name="Morris K."/>
            <person name="Mottagui-Tabar S."/>
            <person name="Mulder N."/>
            <person name="Nakano N."/>
            <person name="Nakauchi H."/>
            <person name="Ng P."/>
            <person name="Nilsson R."/>
            <person name="Nishiguchi S."/>
            <person name="Nishikawa S."/>
            <person name="Nori F."/>
            <person name="Ohara O."/>
            <person name="Okazaki Y."/>
            <person name="Orlando V."/>
            <person name="Pang K.C."/>
            <person name="Pavan W.J."/>
            <person name="Pavesi G."/>
            <person name="Pesole G."/>
            <person name="Petrovsky N."/>
            <person name="Piazza S."/>
            <person name="Reed J."/>
            <person name="Reid J.F."/>
            <person name="Ring B.Z."/>
            <person name="Ringwald M."/>
            <person name="Rost B."/>
            <person name="Ruan Y."/>
            <person name="Salzberg S.L."/>
            <person name="Sandelin A."/>
            <person name="Schneider C."/>
            <person name="Schoenbach C."/>
            <person name="Sekiguchi K."/>
            <person name="Semple C.A."/>
            <person name="Seno S."/>
            <person name="Sessa L."/>
            <person name="Sheng Y."/>
            <person name="Shibata Y."/>
            <person name="Shimada H."/>
            <person name="Shimada K."/>
            <person name="Silva D."/>
            <person name="Sinclair B."/>
            <person name="Sperling S."/>
            <person name="Stupka E."/>
            <person name="Sugiura K."/>
            <person name="Sultana R."/>
            <person name="Takenaka Y."/>
            <person name="Taki K."/>
            <person name="Tammoja K."/>
            <person name="Tan S.L."/>
            <person name="Tang S."/>
            <person name="Taylor M.S."/>
            <person name="Tegner J."/>
            <person name="Teichmann S.A."/>
            <person name="Ueda H.R."/>
            <person name="van Nimwegen E."/>
            <person name="Verardo R."/>
            <person name="Wei C.L."/>
            <person name="Yagi K."/>
            <person name="Yamanishi H."/>
            <person name="Zabarovsky E."/>
            <person name="Zhu S."/>
            <person name="Zimmer A."/>
            <person name="Hide W."/>
            <person name="Bult C."/>
            <person name="Grimmond S.M."/>
            <person name="Teasdale R.D."/>
            <person name="Liu E.T."/>
            <person name="Brusic V."/>
            <person name="Quackenbush J."/>
            <person name="Wahlestedt C."/>
            <person name="Mattick J.S."/>
            <person name="Hume D.A."/>
            <person name="Kai C."/>
            <person name="Sasaki D."/>
            <person name="Tomaru Y."/>
            <person name="Fukuda S."/>
            <person name="Kanamori-Katayama M."/>
            <person name="Suzuki M."/>
            <person name="Aoki J."/>
            <person name="Arakawa T."/>
            <person name="Iida J."/>
            <person name="Imamura K."/>
            <person name="Itoh M."/>
            <person name="Kato T."/>
            <person name="Kawaji H."/>
            <person name="Kawagashira N."/>
            <person name="Kawashima T."/>
            <person name="Kojima M."/>
            <person name="Kondo S."/>
            <person name="Konno H."/>
            <person name="Nakano K."/>
            <person name="Ninomiya N."/>
            <person name="Nishio T."/>
            <person name="Okada M."/>
            <person name="Plessy C."/>
            <person name="Shibata K."/>
            <person name="Shiraki T."/>
            <person name="Suzuki S."/>
            <person name="Tagami M."/>
            <person name="Waki K."/>
            <person name="Watahiki A."/>
            <person name="Okamura-Oho Y."/>
            <person name="Suzuki H."/>
            <person name="Kawai J."/>
            <person name="Hayashizaki Y."/>
        </authorList>
    </citation>
    <scope>NUCLEOTIDE SEQUENCE [LARGE SCALE MRNA]</scope>
    <source>
        <strain>C57BL/6J</strain>
        <tissue>Head</tissue>
        <tissue>Kidney</tissue>
    </source>
</reference>
<reference key="2">
    <citation type="journal article" date="2004" name="Genome Res.">
        <title>The status, quality, and expansion of the NIH full-length cDNA project: the Mammalian Gene Collection (MGC).</title>
        <authorList>
            <consortium name="The MGC Project Team"/>
        </authorList>
    </citation>
    <scope>NUCLEOTIDE SEQUENCE [LARGE SCALE MRNA]</scope>
    <source>
        <strain>C57BL/6J</strain>
        <strain>FVB/N</strain>
        <tissue>Liver</tissue>
        <tissue>Mammary tumor</tissue>
    </source>
</reference>
<reference key="3">
    <citation type="journal article" date="2009" name="Biochem. Soc. Trans.">
        <title>The emerging complexity of protein ubiquitination.</title>
        <authorList>
            <person name="Komander D."/>
        </authorList>
    </citation>
    <scope>REVIEW</scope>
    <scope>FUNCTION</scope>
</reference>
<reference key="4">
    <citation type="journal article" date="2010" name="Cell">
        <title>A tissue-specific atlas of mouse protein phosphorylation and expression.</title>
        <authorList>
            <person name="Huttlin E.L."/>
            <person name="Jedrychowski M.P."/>
            <person name="Elias J.E."/>
            <person name="Goswami T."/>
            <person name="Rad R."/>
            <person name="Beausoleil S.A."/>
            <person name="Villen J."/>
            <person name="Haas W."/>
            <person name="Sowa M.E."/>
            <person name="Gygi S.P."/>
        </authorList>
    </citation>
    <scope>IDENTIFICATION BY MASS SPECTROMETRY [LARGE SCALE ANALYSIS]</scope>
    <source>
        <tissue>Brain</tissue>
        <tissue>Brown adipose tissue</tissue>
        <tissue>Heart</tissue>
        <tissue>Kidney</tissue>
        <tissue>Liver</tissue>
        <tissue>Lung</tissue>
        <tissue>Pancreas</tissue>
        <tissue>Spleen</tissue>
        <tissue>Testis</tissue>
    </source>
</reference>
<reference key="5">
    <citation type="journal article" date="2013" name="Mol. Cell">
        <title>SIRT5-mediated lysine desuccinylation impacts diverse metabolic pathways.</title>
        <authorList>
            <person name="Park J."/>
            <person name="Chen Y."/>
            <person name="Tishkoff D.X."/>
            <person name="Peng C."/>
            <person name="Tan M."/>
            <person name="Dai L."/>
            <person name="Xie Z."/>
            <person name="Zhang Y."/>
            <person name="Zwaans B.M."/>
            <person name="Skinner M.E."/>
            <person name="Lombard D.B."/>
            <person name="Zhao Y."/>
        </authorList>
    </citation>
    <scope>ACETYLATION [LARGE SCALE ANALYSIS] AT LYS-152</scope>
    <scope>IDENTIFICATION BY MASS SPECTROMETRY [LARGE SCALE ANALYSIS]</scope>
    <source>
        <tissue>Embryonic fibroblast</tissue>
    </source>
</reference>
<protein>
    <recommendedName>
        <fullName evidence="6">Ubiquitin-ribosomal protein eS31 fusion protein</fullName>
    </recommendedName>
    <alternativeName>
        <fullName>Ubiquitin carboxyl extension protein 80</fullName>
    </alternativeName>
    <component>
        <recommendedName>
            <fullName>Ubiquitin</fullName>
        </recommendedName>
    </component>
    <component>
        <recommendedName>
            <fullName evidence="6">Small ribosomal subunit protein eS31</fullName>
        </recommendedName>
        <alternativeName>
            <fullName>40S ribosomal protein S27a</fullName>
        </alternativeName>
    </component>
</protein>
<gene>
    <name type="primary">Rps27a</name>
    <name type="synonym">Uba80</name>
    <name type="synonym">Ubcep1</name>
</gene>